<sequence length="137" mass="15502">MLVPKRVKHRREFRGKMRGEAKGGKEVAFGEYGLQATTSHWITNRQIEAARIAMTRYMKRGGKVWIKIFPHKSYTAKAIGVRMGSGKGAPEGWVAPVKRGKIMFEIADVPEEVAREALRLASHKLPVKTKFVKREAE</sequence>
<accession>Q8DS20</accession>
<evidence type="ECO:0000255" key="1">
    <source>
        <dbReference type="HAMAP-Rule" id="MF_01342"/>
    </source>
</evidence>
<evidence type="ECO:0000305" key="2"/>
<proteinExistence type="inferred from homology"/>
<protein>
    <recommendedName>
        <fullName evidence="1">Large ribosomal subunit protein uL16</fullName>
    </recommendedName>
    <alternativeName>
        <fullName evidence="2">50S ribosomal protein L16</fullName>
    </alternativeName>
</protein>
<dbReference type="EMBL" id="AE014133">
    <property type="protein sequence ID" value="AAN59623.1"/>
    <property type="molecule type" value="Genomic_DNA"/>
</dbReference>
<dbReference type="RefSeq" id="NP_722317.1">
    <property type="nucleotide sequence ID" value="NC_004350.2"/>
</dbReference>
<dbReference type="RefSeq" id="WP_002262333.1">
    <property type="nucleotide sequence ID" value="NC_004350.2"/>
</dbReference>
<dbReference type="SMR" id="Q8DS20"/>
<dbReference type="STRING" id="210007.SMU_2020"/>
<dbReference type="GeneID" id="93860222"/>
<dbReference type="KEGG" id="smu:SMU_2020"/>
<dbReference type="PATRIC" id="fig|210007.7.peg.1800"/>
<dbReference type="eggNOG" id="COG0197">
    <property type="taxonomic scope" value="Bacteria"/>
</dbReference>
<dbReference type="HOGENOM" id="CLU_078858_2_1_9"/>
<dbReference type="OrthoDB" id="9802589at2"/>
<dbReference type="PhylomeDB" id="Q8DS20"/>
<dbReference type="Proteomes" id="UP000002512">
    <property type="component" value="Chromosome"/>
</dbReference>
<dbReference type="GO" id="GO:0022625">
    <property type="term" value="C:cytosolic large ribosomal subunit"/>
    <property type="evidence" value="ECO:0007669"/>
    <property type="project" value="TreeGrafter"/>
</dbReference>
<dbReference type="GO" id="GO:0019843">
    <property type="term" value="F:rRNA binding"/>
    <property type="evidence" value="ECO:0007669"/>
    <property type="project" value="UniProtKB-UniRule"/>
</dbReference>
<dbReference type="GO" id="GO:0003735">
    <property type="term" value="F:structural constituent of ribosome"/>
    <property type="evidence" value="ECO:0007669"/>
    <property type="project" value="InterPro"/>
</dbReference>
<dbReference type="GO" id="GO:0000049">
    <property type="term" value="F:tRNA binding"/>
    <property type="evidence" value="ECO:0007669"/>
    <property type="project" value="UniProtKB-KW"/>
</dbReference>
<dbReference type="GO" id="GO:0006412">
    <property type="term" value="P:translation"/>
    <property type="evidence" value="ECO:0007669"/>
    <property type="project" value="UniProtKB-UniRule"/>
</dbReference>
<dbReference type="CDD" id="cd01433">
    <property type="entry name" value="Ribosomal_L16_L10e"/>
    <property type="match status" value="1"/>
</dbReference>
<dbReference type="FunFam" id="3.90.1170.10:FF:000001">
    <property type="entry name" value="50S ribosomal protein L16"/>
    <property type="match status" value="1"/>
</dbReference>
<dbReference type="Gene3D" id="3.90.1170.10">
    <property type="entry name" value="Ribosomal protein L10e/L16"/>
    <property type="match status" value="1"/>
</dbReference>
<dbReference type="HAMAP" id="MF_01342">
    <property type="entry name" value="Ribosomal_uL16"/>
    <property type="match status" value="1"/>
</dbReference>
<dbReference type="InterPro" id="IPR047873">
    <property type="entry name" value="Ribosomal_uL16"/>
</dbReference>
<dbReference type="InterPro" id="IPR000114">
    <property type="entry name" value="Ribosomal_uL16_bact-type"/>
</dbReference>
<dbReference type="InterPro" id="IPR020798">
    <property type="entry name" value="Ribosomal_uL16_CS"/>
</dbReference>
<dbReference type="InterPro" id="IPR016180">
    <property type="entry name" value="Ribosomal_uL16_dom"/>
</dbReference>
<dbReference type="InterPro" id="IPR036920">
    <property type="entry name" value="Ribosomal_uL16_sf"/>
</dbReference>
<dbReference type="NCBIfam" id="TIGR01164">
    <property type="entry name" value="rplP_bact"/>
    <property type="match status" value="1"/>
</dbReference>
<dbReference type="PANTHER" id="PTHR12220">
    <property type="entry name" value="50S/60S RIBOSOMAL PROTEIN L16"/>
    <property type="match status" value="1"/>
</dbReference>
<dbReference type="PANTHER" id="PTHR12220:SF13">
    <property type="entry name" value="LARGE RIBOSOMAL SUBUNIT PROTEIN UL16M"/>
    <property type="match status" value="1"/>
</dbReference>
<dbReference type="Pfam" id="PF00252">
    <property type="entry name" value="Ribosomal_L16"/>
    <property type="match status" value="1"/>
</dbReference>
<dbReference type="PRINTS" id="PR00060">
    <property type="entry name" value="RIBOSOMALL16"/>
</dbReference>
<dbReference type="SUPFAM" id="SSF54686">
    <property type="entry name" value="Ribosomal protein L16p/L10e"/>
    <property type="match status" value="1"/>
</dbReference>
<dbReference type="PROSITE" id="PS00586">
    <property type="entry name" value="RIBOSOMAL_L16_1"/>
    <property type="match status" value="1"/>
</dbReference>
<dbReference type="PROSITE" id="PS00701">
    <property type="entry name" value="RIBOSOMAL_L16_2"/>
    <property type="match status" value="1"/>
</dbReference>
<reference key="1">
    <citation type="journal article" date="2002" name="Proc. Natl. Acad. Sci. U.S.A.">
        <title>Genome sequence of Streptococcus mutans UA159, a cariogenic dental pathogen.</title>
        <authorList>
            <person name="Ajdic D.J."/>
            <person name="McShan W.M."/>
            <person name="McLaughlin R.E."/>
            <person name="Savic G."/>
            <person name="Chang J."/>
            <person name="Carson M.B."/>
            <person name="Primeaux C."/>
            <person name="Tian R."/>
            <person name="Kenton S."/>
            <person name="Jia H.G."/>
            <person name="Lin S.P."/>
            <person name="Qian Y."/>
            <person name="Li S."/>
            <person name="Zhu H."/>
            <person name="Najar F.Z."/>
            <person name="Lai H."/>
            <person name="White J."/>
            <person name="Roe B.A."/>
            <person name="Ferretti J.J."/>
        </authorList>
    </citation>
    <scope>NUCLEOTIDE SEQUENCE [LARGE SCALE GENOMIC DNA]</scope>
    <source>
        <strain>ATCC 700610 / UA159</strain>
    </source>
</reference>
<name>RL16_STRMU</name>
<keyword id="KW-1185">Reference proteome</keyword>
<keyword id="KW-0687">Ribonucleoprotein</keyword>
<keyword id="KW-0689">Ribosomal protein</keyword>
<keyword id="KW-0694">RNA-binding</keyword>
<keyword id="KW-0699">rRNA-binding</keyword>
<keyword id="KW-0820">tRNA-binding</keyword>
<gene>
    <name evidence="1" type="primary">rplP</name>
    <name type="ordered locus">SMU_2020</name>
</gene>
<comment type="function">
    <text evidence="1">Binds 23S rRNA and is also seen to make contacts with the A and possibly P site tRNAs.</text>
</comment>
<comment type="subunit">
    <text evidence="1">Part of the 50S ribosomal subunit.</text>
</comment>
<comment type="similarity">
    <text evidence="1">Belongs to the universal ribosomal protein uL16 family.</text>
</comment>
<feature type="chain" id="PRO_0000062216" description="Large ribosomal subunit protein uL16">
    <location>
        <begin position="1"/>
        <end position="137"/>
    </location>
</feature>
<organism>
    <name type="scientific">Streptococcus mutans serotype c (strain ATCC 700610 / UA159)</name>
    <dbReference type="NCBI Taxonomy" id="210007"/>
    <lineage>
        <taxon>Bacteria</taxon>
        <taxon>Bacillati</taxon>
        <taxon>Bacillota</taxon>
        <taxon>Bacilli</taxon>
        <taxon>Lactobacillales</taxon>
        <taxon>Streptococcaceae</taxon>
        <taxon>Streptococcus</taxon>
    </lineage>
</organism>